<evidence type="ECO:0000255" key="1">
    <source>
        <dbReference type="HAMAP-Rule" id="MF_00253"/>
    </source>
</evidence>
<dbReference type="EC" id="6.1.1.14" evidence="1"/>
<dbReference type="EMBL" id="CP000511">
    <property type="protein sequence ID" value="ABM14599.1"/>
    <property type="molecule type" value="Genomic_DNA"/>
</dbReference>
<dbReference type="RefSeq" id="WP_011780986.1">
    <property type="nucleotide sequence ID" value="NC_008726.1"/>
</dbReference>
<dbReference type="SMR" id="A1TBP9"/>
<dbReference type="STRING" id="350058.Mvan_3818"/>
<dbReference type="KEGG" id="mva:Mvan_3818"/>
<dbReference type="eggNOG" id="COG0423">
    <property type="taxonomic scope" value="Bacteria"/>
</dbReference>
<dbReference type="HOGENOM" id="CLU_015515_2_1_11"/>
<dbReference type="Proteomes" id="UP000009159">
    <property type="component" value="Chromosome"/>
</dbReference>
<dbReference type="GO" id="GO:0005737">
    <property type="term" value="C:cytoplasm"/>
    <property type="evidence" value="ECO:0007669"/>
    <property type="project" value="UniProtKB-SubCell"/>
</dbReference>
<dbReference type="GO" id="GO:0005524">
    <property type="term" value="F:ATP binding"/>
    <property type="evidence" value="ECO:0007669"/>
    <property type="project" value="UniProtKB-UniRule"/>
</dbReference>
<dbReference type="GO" id="GO:0004820">
    <property type="term" value="F:glycine-tRNA ligase activity"/>
    <property type="evidence" value="ECO:0000250"/>
    <property type="project" value="UniProtKB"/>
</dbReference>
<dbReference type="GO" id="GO:0046983">
    <property type="term" value="F:protein dimerization activity"/>
    <property type="evidence" value="ECO:0000250"/>
    <property type="project" value="UniProtKB"/>
</dbReference>
<dbReference type="GO" id="GO:0006426">
    <property type="term" value="P:glycyl-tRNA aminoacylation"/>
    <property type="evidence" value="ECO:0007669"/>
    <property type="project" value="UniProtKB-UniRule"/>
</dbReference>
<dbReference type="CDD" id="cd00774">
    <property type="entry name" value="GlyRS-like_core"/>
    <property type="match status" value="1"/>
</dbReference>
<dbReference type="CDD" id="cd00858">
    <property type="entry name" value="GlyRS_anticodon"/>
    <property type="match status" value="1"/>
</dbReference>
<dbReference type="FunFam" id="3.40.50.800:FF:000002">
    <property type="entry name" value="Glycine--tRNA ligase"/>
    <property type="match status" value="1"/>
</dbReference>
<dbReference type="Gene3D" id="3.40.50.800">
    <property type="entry name" value="Anticodon-binding domain"/>
    <property type="match status" value="1"/>
</dbReference>
<dbReference type="Gene3D" id="3.30.930.10">
    <property type="entry name" value="Bira Bifunctional Protein, Domain 2"/>
    <property type="match status" value="1"/>
</dbReference>
<dbReference type="HAMAP" id="MF_00253_B">
    <property type="entry name" value="Gly_tRNA_synth_B"/>
    <property type="match status" value="1"/>
</dbReference>
<dbReference type="InterPro" id="IPR002314">
    <property type="entry name" value="aa-tRNA-synt_IIb"/>
</dbReference>
<dbReference type="InterPro" id="IPR006195">
    <property type="entry name" value="aa-tRNA-synth_II"/>
</dbReference>
<dbReference type="InterPro" id="IPR045864">
    <property type="entry name" value="aa-tRNA-synth_II/BPL/LPL"/>
</dbReference>
<dbReference type="InterPro" id="IPR004154">
    <property type="entry name" value="Anticodon-bd"/>
</dbReference>
<dbReference type="InterPro" id="IPR036621">
    <property type="entry name" value="Anticodon-bd_dom_sf"/>
</dbReference>
<dbReference type="InterPro" id="IPR027031">
    <property type="entry name" value="Gly-tRNA_synthase/POLG2"/>
</dbReference>
<dbReference type="InterPro" id="IPR022961">
    <property type="entry name" value="Gly_tRNA_ligase_bac"/>
</dbReference>
<dbReference type="InterPro" id="IPR033731">
    <property type="entry name" value="GlyRS-like_core"/>
</dbReference>
<dbReference type="InterPro" id="IPR002315">
    <property type="entry name" value="tRNA-synt_gly"/>
</dbReference>
<dbReference type="NCBIfam" id="TIGR00389">
    <property type="entry name" value="glyS_dimeric"/>
    <property type="match status" value="1"/>
</dbReference>
<dbReference type="NCBIfam" id="NF003211">
    <property type="entry name" value="PRK04173.1"/>
    <property type="match status" value="1"/>
</dbReference>
<dbReference type="PANTHER" id="PTHR10745:SF8">
    <property type="entry name" value="DNA POLYMERASE SUBUNIT GAMMA-2, MITOCHONDRIAL"/>
    <property type="match status" value="1"/>
</dbReference>
<dbReference type="PANTHER" id="PTHR10745">
    <property type="entry name" value="GLYCYL-TRNA SYNTHETASE/DNA POLYMERASE SUBUNIT GAMMA-2"/>
    <property type="match status" value="1"/>
</dbReference>
<dbReference type="Pfam" id="PF03129">
    <property type="entry name" value="HGTP_anticodon"/>
    <property type="match status" value="1"/>
</dbReference>
<dbReference type="Pfam" id="PF00587">
    <property type="entry name" value="tRNA-synt_2b"/>
    <property type="match status" value="1"/>
</dbReference>
<dbReference type="PRINTS" id="PR01043">
    <property type="entry name" value="TRNASYNTHGLY"/>
</dbReference>
<dbReference type="SUPFAM" id="SSF52954">
    <property type="entry name" value="Class II aaRS ABD-related"/>
    <property type="match status" value="1"/>
</dbReference>
<dbReference type="SUPFAM" id="SSF55681">
    <property type="entry name" value="Class II aaRS and biotin synthetases"/>
    <property type="match status" value="1"/>
</dbReference>
<dbReference type="PROSITE" id="PS50862">
    <property type="entry name" value="AA_TRNA_LIGASE_II"/>
    <property type="match status" value="1"/>
</dbReference>
<sequence>MAPSSSIIDTVANLAKRRGLVFQSGEIYGGTKSAWDYGPLGVELKENIKRQWWRAVVTSRDDVVGLDSAIILPREVWVASGHVEVFNDPLVECLNCHKRHRQDHMQEAYAEKEAKKGVTVDPDAVAMTEIVCPDCGTKGQWTEPRDFNMMLKTYLGPIETEEGLHYLRPETAQGIFVNFANVVTTARKKPPFGIGQIGKSFRNEITPGNFIFRTREFEQMEMEFFVEPSTAAEWHRYWIETRLQWYVDLGINRDNLRLYEHPKEKLSHYSDGTTDIEYKFGFAGNPWGELEGIANRTNFDLSTHSKHSGVDLSFYDQANDTRYVPYVIEPAAGLTRSLMAFLVDAYTEDEAPNAKGGVDKRTVLRLDPRLAPVKAAVLPLSRHADLSPKARDLAAELRQSWNVEFDDAGAIGRRYRRQDEIGTPYCITFDFDSLEDHAVTIRERDAMTQERVAISEVSNYLAVRLKGS</sequence>
<keyword id="KW-0030">Aminoacyl-tRNA synthetase</keyword>
<keyword id="KW-0067">ATP-binding</keyword>
<keyword id="KW-0963">Cytoplasm</keyword>
<keyword id="KW-0436">Ligase</keyword>
<keyword id="KW-0547">Nucleotide-binding</keyword>
<keyword id="KW-0648">Protein biosynthesis</keyword>
<gene>
    <name evidence="1" type="primary">glyQS</name>
    <name type="ordered locus">Mvan_3818</name>
</gene>
<reference key="1">
    <citation type="submission" date="2006-12" db="EMBL/GenBank/DDBJ databases">
        <title>Complete sequence of Mycobacterium vanbaalenii PYR-1.</title>
        <authorList>
            <consortium name="US DOE Joint Genome Institute"/>
            <person name="Copeland A."/>
            <person name="Lucas S."/>
            <person name="Lapidus A."/>
            <person name="Barry K."/>
            <person name="Detter J.C."/>
            <person name="Glavina del Rio T."/>
            <person name="Hammon N."/>
            <person name="Israni S."/>
            <person name="Dalin E."/>
            <person name="Tice H."/>
            <person name="Pitluck S."/>
            <person name="Singan V."/>
            <person name="Schmutz J."/>
            <person name="Larimer F."/>
            <person name="Land M."/>
            <person name="Hauser L."/>
            <person name="Kyrpides N."/>
            <person name="Anderson I.J."/>
            <person name="Miller C."/>
            <person name="Richardson P."/>
        </authorList>
    </citation>
    <scope>NUCLEOTIDE SEQUENCE [LARGE SCALE GENOMIC DNA]</scope>
    <source>
        <strain>DSM 7251 / JCM 13017 / BCRC 16820 / KCTC 9966 / NRRL B-24157 / PYR-1</strain>
    </source>
</reference>
<feature type="chain" id="PRO_1000047382" description="Glycine--tRNA ligase">
    <location>
        <begin position="1"/>
        <end position="468"/>
    </location>
</feature>
<feature type="binding site" evidence="1">
    <location>
        <position position="101"/>
    </location>
    <ligand>
        <name>substrate</name>
    </ligand>
</feature>
<feature type="binding site" evidence="1">
    <location>
        <position position="170"/>
    </location>
    <ligand>
        <name>substrate</name>
    </ligand>
</feature>
<feature type="binding site" evidence="1">
    <location>
        <begin position="202"/>
        <end position="204"/>
    </location>
    <ligand>
        <name>ATP</name>
        <dbReference type="ChEBI" id="CHEBI:30616"/>
    </ligand>
</feature>
<feature type="binding site" evidence="1">
    <location>
        <begin position="212"/>
        <end position="217"/>
    </location>
    <ligand>
        <name>ATP</name>
        <dbReference type="ChEBI" id="CHEBI:30616"/>
    </ligand>
</feature>
<feature type="binding site" evidence="1">
    <location>
        <begin position="217"/>
        <end position="221"/>
    </location>
    <ligand>
        <name>substrate</name>
    </ligand>
</feature>
<feature type="binding site" evidence="1">
    <location>
        <begin position="289"/>
        <end position="290"/>
    </location>
    <ligand>
        <name>ATP</name>
        <dbReference type="ChEBI" id="CHEBI:30616"/>
    </ligand>
</feature>
<feature type="binding site" evidence="1">
    <location>
        <begin position="329"/>
        <end position="333"/>
    </location>
    <ligand>
        <name>substrate</name>
    </ligand>
</feature>
<feature type="binding site" evidence="1">
    <location>
        <begin position="333"/>
        <end position="336"/>
    </location>
    <ligand>
        <name>ATP</name>
        <dbReference type="ChEBI" id="CHEBI:30616"/>
    </ligand>
</feature>
<name>SYG_MYCVP</name>
<proteinExistence type="inferred from homology"/>
<comment type="function">
    <text evidence="1">Catalyzes the attachment of glycine to tRNA(Gly).</text>
</comment>
<comment type="catalytic activity">
    <reaction evidence="1">
        <text>tRNA(Gly) + glycine + ATP = glycyl-tRNA(Gly) + AMP + diphosphate</text>
        <dbReference type="Rhea" id="RHEA:16013"/>
        <dbReference type="Rhea" id="RHEA-COMP:9664"/>
        <dbReference type="Rhea" id="RHEA-COMP:9683"/>
        <dbReference type="ChEBI" id="CHEBI:30616"/>
        <dbReference type="ChEBI" id="CHEBI:33019"/>
        <dbReference type="ChEBI" id="CHEBI:57305"/>
        <dbReference type="ChEBI" id="CHEBI:78442"/>
        <dbReference type="ChEBI" id="CHEBI:78522"/>
        <dbReference type="ChEBI" id="CHEBI:456215"/>
        <dbReference type="EC" id="6.1.1.14"/>
    </reaction>
</comment>
<comment type="subunit">
    <text evidence="1">Homodimer.</text>
</comment>
<comment type="subcellular location">
    <subcellularLocation>
        <location evidence="1">Cytoplasm</location>
    </subcellularLocation>
</comment>
<comment type="similarity">
    <text evidence="1">Belongs to the class-II aminoacyl-tRNA synthetase family.</text>
</comment>
<organism>
    <name type="scientific">Mycolicibacterium vanbaalenii (strain DSM 7251 / JCM 13017 / BCRC 16820 / KCTC 9966 / NRRL B-24157 / PYR-1)</name>
    <name type="common">Mycobacterium vanbaalenii</name>
    <dbReference type="NCBI Taxonomy" id="350058"/>
    <lineage>
        <taxon>Bacteria</taxon>
        <taxon>Bacillati</taxon>
        <taxon>Actinomycetota</taxon>
        <taxon>Actinomycetes</taxon>
        <taxon>Mycobacteriales</taxon>
        <taxon>Mycobacteriaceae</taxon>
        <taxon>Mycolicibacterium</taxon>
    </lineage>
</organism>
<accession>A1TBP9</accession>
<protein>
    <recommendedName>
        <fullName evidence="1">Glycine--tRNA ligase</fullName>
        <ecNumber evidence="1">6.1.1.14</ecNumber>
    </recommendedName>
    <alternativeName>
        <fullName evidence="1">Glycyl-tRNA synthetase</fullName>
        <shortName evidence="1">GlyRS</shortName>
    </alternativeName>
</protein>